<proteinExistence type="inferred from homology"/>
<protein>
    <recommendedName>
        <fullName evidence="1">Large ribosomal subunit protein uL23</fullName>
    </recommendedName>
    <alternativeName>
        <fullName evidence="2">50S ribosomal protein L23</fullName>
    </alternativeName>
</protein>
<keyword id="KW-0687">Ribonucleoprotein</keyword>
<keyword id="KW-0689">Ribosomal protein</keyword>
<keyword id="KW-0694">RNA-binding</keyword>
<keyword id="KW-0699">rRNA-binding</keyword>
<reference key="1">
    <citation type="submission" date="2006-11" db="EMBL/GenBank/DDBJ databases">
        <title>Sequence of Campylobacter fetus subsp. fetus 82-40.</title>
        <authorList>
            <person name="Fouts D.E."/>
            <person name="Nelson K.E."/>
        </authorList>
    </citation>
    <scope>NUCLEOTIDE SEQUENCE [LARGE SCALE GENOMIC DNA]</scope>
    <source>
        <strain>82-40</strain>
    </source>
</reference>
<dbReference type="EMBL" id="CP000487">
    <property type="protein sequence ID" value="ABK82101.1"/>
    <property type="molecule type" value="Genomic_DNA"/>
</dbReference>
<dbReference type="RefSeq" id="WP_002847963.1">
    <property type="nucleotide sequence ID" value="NC_008599.1"/>
</dbReference>
<dbReference type="SMR" id="A0RM13"/>
<dbReference type="KEGG" id="cff:CFF8240_0036"/>
<dbReference type="eggNOG" id="COG0089">
    <property type="taxonomic scope" value="Bacteria"/>
</dbReference>
<dbReference type="HOGENOM" id="CLU_037562_3_1_7"/>
<dbReference type="Proteomes" id="UP000000760">
    <property type="component" value="Chromosome"/>
</dbReference>
<dbReference type="GO" id="GO:1990904">
    <property type="term" value="C:ribonucleoprotein complex"/>
    <property type="evidence" value="ECO:0007669"/>
    <property type="project" value="UniProtKB-KW"/>
</dbReference>
<dbReference type="GO" id="GO:0005840">
    <property type="term" value="C:ribosome"/>
    <property type="evidence" value="ECO:0007669"/>
    <property type="project" value="UniProtKB-KW"/>
</dbReference>
<dbReference type="GO" id="GO:0019843">
    <property type="term" value="F:rRNA binding"/>
    <property type="evidence" value="ECO:0007669"/>
    <property type="project" value="UniProtKB-UniRule"/>
</dbReference>
<dbReference type="GO" id="GO:0003735">
    <property type="term" value="F:structural constituent of ribosome"/>
    <property type="evidence" value="ECO:0007669"/>
    <property type="project" value="InterPro"/>
</dbReference>
<dbReference type="GO" id="GO:0006412">
    <property type="term" value="P:translation"/>
    <property type="evidence" value="ECO:0007669"/>
    <property type="project" value="UniProtKB-UniRule"/>
</dbReference>
<dbReference type="Gene3D" id="3.30.70.330">
    <property type="match status" value="1"/>
</dbReference>
<dbReference type="HAMAP" id="MF_01369_B">
    <property type="entry name" value="Ribosomal_uL23_B"/>
    <property type="match status" value="1"/>
</dbReference>
<dbReference type="InterPro" id="IPR012677">
    <property type="entry name" value="Nucleotide-bd_a/b_plait_sf"/>
</dbReference>
<dbReference type="InterPro" id="IPR013025">
    <property type="entry name" value="Ribosomal_uL23-like"/>
</dbReference>
<dbReference type="InterPro" id="IPR012678">
    <property type="entry name" value="Ribosomal_uL23/eL15/eS24_sf"/>
</dbReference>
<dbReference type="NCBIfam" id="NF004362">
    <property type="entry name" value="PRK05738.2-2"/>
    <property type="match status" value="1"/>
</dbReference>
<dbReference type="Pfam" id="PF00276">
    <property type="entry name" value="Ribosomal_L23"/>
    <property type="match status" value="1"/>
</dbReference>
<dbReference type="SUPFAM" id="SSF54189">
    <property type="entry name" value="Ribosomal proteins S24e, L23 and L15e"/>
    <property type="match status" value="1"/>
</dbReference>
<feature type="chain" id="PRO_1000144545" description="Large ribosomal subunit protein uL23">
    <location>
        <begin position="1"/>
        <end position="93"/>
    </location>
</feature>
<sequence length="93" mass="10505">MADITDIKTILYTEKTLGLQEQGVVVIQTSPKMTKNGLKEVLREYFGVTPLRVNSLRMDGKVKRFKGRVGVRNDFKKFYVKLPDGVSLENGEA</sequence>
<name>RL23_CAMFF</name>
<gene>
    <name evidence="1" type="primary">rplW</name>
    <name type="ordered locus">CFF8240_0036</name>
</gene>
<evidence type="ECO:0000255" key="1">
    <source>
        <dbReference type="HAMAP-Rule" id="MF_01369"/>
    </source>
</evidence>
<evidence type="ECO:0000305" key="2"/>
<accession>A0RM13</accession>
<comment type="function">
    <text evidence="1">One of the early assembly proteins it binds 23S rRNA. One of the proteins that surrounds the polypeptide exit tunnel on the outside of the ribosome. Forms the main docking site for trigger factor binding to the ribosome.</text>
</comment>
<comment type="subunit">
    <text evidence="1">Part of the 50S ribosomal subunit. Contacts protein L29, and trigger factor when it is bound to the ribosome.</text>
</comment>
<comment type="similarity">
    <text evidence="1">Belongs to the universal ribosomal protein uL23 family.</text>
</comment>
<organism>
    <name type="scientific">Campylobacter fetus subsp. fetus (strain 82-40)</name>
    <dbReference type="NCBI Taxonomy" id="360106"/>
    <lineage>
        <taxon>Bacteria</taxon>
        <taxon>Pseudomonadati</taxon>
        <taxon>Campylobacterota</taxon>
        <taxon>Epsilonproteobacteria</taxon>
        <taxon>Campylobacterales</taxon>
        <taxon>Campylobacteraceae</taxon>
        <taxon>Campylobacter</taxon>
    </lineage>
</organism>